<sequence length="631" mass="71146">MKSVILKPKNLVLLGAGVTTTYYLYKFFSAPSVSKDEGDKFGFNAPDPAALARAAVKEKKERFVKPSDNVCPILILYGTEYGLSAEVAKKLEESINSKLEGFWARIIDMEEYEIIEFEKEQIVLIITSTYGDGVPPTTARPFFDYLEANRLNLSHIQFSVLALGDRSYPHYCAAGKTLDKQFEEMGAKRFRDRIEVDQEDWTCFDRYIDTVCGLVPTLGGVEKREGQDYLYEKAKLFALSQGKYNKKKPYSSKLLVKRVLTKGDKVGIHLEFELGDSELKYVPGDALAILPDNAASEVSAIISLLKLSPSFKVSTPGWHYQEGEQPNPSQITLTHILTKCFDIHNCKPELLQLLKDNVKNQQEKEKLTNLLAQGTGKSNTQLVEFLENHHLIDILKMFSSARPPIDDLLAQLAKLLPRYYSIASSMSENKLAVSLCVAVVKYDLHGSERVGIASTHMADRMNVGDRVSIFINNNPDFRLPEDPTTPILMVGPGTGIAPFVSFIQERKALGHTGENHLYFGCRRSDEDFLYSKELQQYHNDGLIKLYTAFSRETSQKVYVQNRLLENSQQICDLINAGGHIYICGDAKSMAPQVHETLSLIITKHMSIDEADAQALLHKLEKEKRYQKDVWF</sequence>
<name>REDA_DICDI</name>
<protein>
    <recommendedName>
        <fullName>NADPH oxidoreductase A</fullName>
        <ecNumber>1.6.-.-</ecNumber>
    </recommendedName>
</protein>
<feature type="chain" id="PRO_0000351222" description="NADPH oxidoreductase A">
    <location>
        <begin position="1"/>
        <end position="631"/>
    </location>
</feature>
<feature type="domain" description="Flavodoxin-like" evidence="2">
    <location>
        <begin position="73"/>
        <end position="212"/>
    </location>
</feature>
<feature type="domain" description="FAD-binding FR-type" evidence="3">
    <location>
        <begin position="247"/>
        <end position="480"/>
    </location>
</feature>
<feature type="binding site" evidence="2">
    <location>
        <begin position="79"/>
        <end position="83"/>
    </location>
    <ligand>
        <name>FMN</name>
        <dbReference type="ChEBI" id="CHEBI:58210"/>
    </ligand>
</feature>
<feature type="binding site" evidence="2">
    <location>
        <begin position="160"/>
        <end position="191"/>
    </location>
    <ligand>
        <name>FMN</name>
        <dbReference type="ChEBI" id="CHEBI:58210"/>
    </ligand>
</feature>
<feature type="binding site" evidence="1">
    <location>
        <begin position="249"/>
        <end position="299"/>
    </location>
    <ligand>
        <name>FAD</name>
        <dbReference type="ChEBI" id="CHEBI:57692"/>
    </ligand>
</feature>
<feature type="binding site" evidence="1">
    <location>
        <begin position="504"/>
        <end position="630"/>
    </location>
    <ligand>
        <name>NADP(+)</name>
        <dbReference type="ChEBI" id="CHEBI:58349"/>
    </ligand>
</feature>
<gene>
    <name type="primary">redA</name>
    <name type="ORF">DDB_G0293904</name>
</gene>
<dbReference type="EC" id="1.6.-.-"/>
<dbReference type="EMBL" id="AF012946">
    <property type="protein sequence ID" value="AAB70186.1"/>
    <property type="status" value="ALT_FRAME"/>
    <property type="molecule type" value="Genomic_DNA"/>
</dbReference>
<dbReference type="EMBL" id="DQ344637">
    <property type="protein sequence ID" value="ABC70200.1"/>
    <property type="molecule type" value="mRNA"/>
</dbReference>
<dbReference type="EMBL" id="AAFI02000224">
    <property type="protein sequence ID" value="EAL60451.1"/>
    <property type="molecule type" value="Genomic_DNA"/>
</dbReference>
<dbReference type="RefSeq" id="XP_628906.1">
    <property type="nucleotide sequence ID" value="XM_628904.1"/>
</dbReference>
<dbReference type="SMR" id="Q54B10"/>
<dbReference type="FunCoup" id="Q54B10">
    <property type="interactions" value="22"/>
</dbReference>
<dbReference type="STRING" id="44689.Q54B10"/>
<dbReference type="GlyGen" id="Q54B10">
    <property type="glycosylation" value="2 sites"/>
</dbReference>
<dbReference type="PaxDb" id="44689-DDB0215407"/>
<dbReference type="EnsemblProtists" id="EAL60451">
    <property type="protein sequence ID" value="EAL60451"/>
    <property type="gene ID" value="DDB_G0293904"/>
</dbReference>
<dbReference type="GeneID" id="8629523"/>
<dbReference type="KEGG" id="ddi:DDB_G0293904"/>
<dbReference type="dictyBase" id="DDB_G0293904">
    <property type="gene designation" value="redA"/>
</dbReference>
<dbReference type="VEuPathDB" id="AmoebaDB:DDB_G0293904"/>
<dbReference type="eggNOG" id="KOG1158">
    <property type="taxonomic scope" value="Eukaryota"/>
</dbReference>
<dbReference type="HOGENOM" id="CLU_001570_17_7_1"/>
<dbReference type="InParanoid" id="Q54B10"/>
<dbReference type="OMA" id="ARPFFDY"/>
<dbReference type="PhylomeDB" id="Q54B10"/>
<dbReference type="PRO" id="PR:Q54B10"/>
<dbReference type="Proteomes" id="UP000002195">
    <property type="component" value="Chromosome 6"/>
</dbReference>
<dbReference type="GO" id="GO:0005829">
    <property type="term" value="C:cytosol"/>
    <property type="evidence" value="ECO:0000318"/>
    <property type="project" value="GO_Central"/>
</dbReference>
<dbReference type="GO" id="GO:0050660">
    <property type="term" value="F:flavin adenine dinucleotide binding"/>
    <property type="evidence" value="ECO:0000250"/>
    <property type="project" value="dictyBase"/>
</dbReference>
<dbReference type="GO" id="GO:0010181">
    <property type="term" value="F:FMN binding"/>
    <property type="evidence" value="ECO:0000250"/>
    <property type="project" value="dictyBase"/>
</dbReference>
<dbReference type="GO" id="GO:0050661">
    <property type="term" value="F:NADP binding"/>
    <property type="evidence" value="ECO:0000250"/>
    <property type="project" value="dictyBase"/>
</dbReference>
<dbReference type="GO" id="GO:0003958">
    <property type="term" value="F:NADPH-hemoprotein reductase activity"/>
    <property type="evidence" value="ECO:0000250"/>
    <property type="project" value="dictyBase"/>
</dbReference>
<dbReference type="GO" id="GO:0016491">
    <property type="term" value="F:oxidoreductase activity"/>
    <property type="evidence" value="ECO:0000318"/>
    <property type="project" value="GO_Central"/>
</dbReference>
<dbReference type="GO" id="GO:0030587">
    <property type="term" value="P:sorocarp development"/>
    <property type="evidence" value="ECO:0000315"/>
    <property type="project" value="dictyBase"/>
</dbReference>
<dbReference type="CDD" id="cd06199">
    <property type="entry name" value="SiR"/>
    <property type="match status" value="1"/>
</dbReference>
<dbReference type="FunFam" id="1.20.990.10:FF:000033">
    <property type="entry name" value="NADPH oxidoreductase A"/>
    <property type="match status" value="1"/>
</dbReference>
<dbReference type="FunFam" id="3.40.50.360:FF:000090">
    <property type="entry name" value="NADPH oxidoreductase A"/>
    <property type="match status" value="1"/>
</dbReference>
<dbReference type="FunFam" id="3.40.50.80:FF:000001">
    <property type="entry name" value="NADPH--cytochrome P450 reductase 1"/>
    <property type="match status" value="1"/>
</dbReference>
<dbReference type="Gene3D" id="3.40.50.360">
    <property type="match status" value="1"/>
</dbReference>
<dbReference type="Gene3D" id="1.20.990.10">
    <property type="entry name" value="NADPH-cytochrome p450 Reductase, Chain A, domain 3"/>
    <property type="match status" value="1"/>
</dbReference>
<dbReference type="Gene3D" id="3.40.50.80">
    <property type="entry name" value="Nucleotide-binding domain of ferredoxin-NADP reductase (FNR) module"/>
    <property type="match status" value="1"/>
</dbReference>
<dbReference type="Gene3D" id="2.40.30.10">
    <property type="entry name" value="Translation factors"/>
    <property type="match status" value="1"/>
</dbReference>
<dbReference type="InterPro" id="IPR003097">
    <property type="entry name" value="CysJ-like_FAD-binding"/>
</dbReference>
<dbReference type="InterPro" id="IPR017927">
    <property type="entry name" value="FAD-bd_FR_type"/>
</dbReference>
<dbReference type="InterPro" id="IPR001094">
    <property type="entry name" value="Flavdoxin-like"/>
</dbReference>
<dbReference type="InterPro" id="IPR008254">
    <property type="entry name" value="Flavodoxin/NO_synth"/>
</dbReference>
<dbReference type="InterPro" id="IPR001709">
    <property type="entry name" value="Flavoprot_Pyr_Nucl_cyt_Rdtase"/>
</dbReference>
<dbReference type="InterPro" id="IPR029039">
    <property type="entry name" value="Flavoprotein-like_sf"/>
</dbReference>
<dbReference type="InterPro" id="IPR039261">
    <property type="entry name" value="FNR_nucleotide-bd"/>
</dbReference>
<dbReference type="InterPro" id="IPR023173">
    <property type="entry name" value="NADPH_Cyt_P450_Rdtase_alpha"/>
</dbReference>
<dbReference type="InterPro" id="IPR001433">
    <property type="entry name" value="OxRdtase_FAD/NAD-bd"/>
</dbReference>
<dbReference type="InterPro" id="IPR017938">
    <property type="entry name" value="Riboflavin_synthase-like_b-brl"/>
</dbReference>
<dbReference type="PANTHER" id="PTHR19384:SF128">
    <property type="entry name" value="NADPH OXIDOREDUCTASE A"/>
    <property type="match status" value="1"/>
</dbReference>
<dbReference type="PANTHER" id="PTHR19384">
    <property type="entry name" value="NITRIC OXIDE SYNTHASE-RELATED"/>
    <property type="match status" value="1"/>
</dbReference>
<dbReference type="Pfam" id="PF00667">
    <property type="entry name" value="FAD_binding_1"/>
    <property type="match status" value="1"/>
</dbReference>
<dbReference type="Pfam" id="PF00258">
    <property type="entry name" value="Flavodoxin_1"/>
    <property type="match status" value="1"/>
</dbReference>
<dbReference type="Pfam" id="PF00175">
    <property type="entry name" value="NAD_binding_1"/>
    <property type="match status" value="1"/>
</dbReference>
<dbReference type="PRINTS" id="PR00369">
    <property type="entry name" value="FLAVODOXIN"/>
</dbReference>
<dbReference type="PRINTS" id="PR00371">
    <property type="entry name" value="FPNCR"/>
</dbReference>
<dbReference type="SUPFAM" id="SSF52343">
    <property type="entry name" value="Ferredoxin reductase-like, C-terminal NADP-linked domain"/>
    <property type="match status" value="1"/>
</dbReference>
<dbReference type="SUPFAM" id="SSF52218">
    <property type="entry name" value="Flavoproteins"/>
    <property type="match status" value="1"/>
</dbReference>
<dbReference type="SUPFAM" id="SSF63380">
    <property type="entry name" value="Riboflavin synthase domain-like"/>
    <property type="match status" value="1"/>
</dbReference>
<dbReference type="PROSITE" id="PS51384">
    <property type="entry name" value="FAD_FR"/>
    <property type="match status" value="1"/>
</dbReference>
<dbReference type="PROSITE" id="PS50902">
    <property type="entry name" value="FLAVODOXIN_LIKE"/>
    <property type="match status" value="1"/>
</dbReference>
<keyword id="KW-0217">Developmental protein</keyword>
<keyword id="KW-0274">FAD</keyword>
<keyword id="KW-0285">Flavoprotein</keyword>
<keyword id="KW-0288">FMN</keyword>
<keyword id="KW-0521">NADP</keyword>
<keyword id="KW-0560">Oxidoreductase</keyword>
<keyword id="KW-1185">Reference proteome</keyword>
<evidence type="ECO:0000250" key="1"/>
<evidence type="ECO:0000255" key="2">
    <source>
        <dbReference type="PROSITE-ProRule" id="PRU00088"/>
    </source>
</evidence>
<evidence type="ECO:0000255" key="3">
    <source>
        <dbReference type="PROSITE-ProRule" id="PRU00716"/>
    </source>
</evidence>
<evidence type="ECO:0000269" key="4">
    <source>
    </source>
</evidence>
<evidence type="ECO:0000305" key="5"/>
<proteinExistence type="evidence at transcript level"/>
<reference key="1">
    <citation type="journal article" date="2008" name="BMC Dev. Biol.">
        <title>The P450 oxidoreductase, RedA, controls development beyond the mound stage in Dictyostelium discoideum.</title>
        <authorList>
            <person name="Gonzalez-Kristeller D.C."/>
            <person name="Farage L."/>
            <person name="Fiorini L.C."/>
            <person name="Loomis W.F."/>
            <person name="da Silva A.M."/>
        </authorList>
    </citation>
    <scope>NUCLEOTIDE SEQUENCE [MRNA]</scope>
    <scope>NUCLEOTIDE SEQUENCE [GENOMIC DNA] OF 1-614</scope>
    <scope>FUNCTION</scope>
    <scope>DEVELOPMENTAL STAGE</scope>
    <scope>DISRUPTION PHENOTYPE</scope>
</reference>
<reference key="2">
    <citation type="journal article" date="2005" name="Nature">
        <title>The genome of the social amoeba Dictyostelium discoideum.</title>
        <authorList>
            <person name="Eichinger L."/>
            <person name="Pachebat J.A."/>
            <person name="Gloeckner G."/>
            <person name="Rajandream M.A."/>
            <person name="Sucgang R."/>
            <person name="Berriman M."/>
            <person name="Song J."/>
            <person name="Olsen R."/>
            <person name="Szafranski K."/>
            <person name="Xu Q."/>
            <person name="Tunggal B."/>
            <person name="Kummerfeld S."/>
            <person name="Madera M."/>
            <person name="Konfortov B.A."/>
            <person name="Rivero F."/>
            <person name="Bankier A.T."/>
            <person name="Lehmann R."/>
            <person name="Hamlin N."/>
            <person name="Davies R."/>
            <person name="Gaudet P."/>
            <person name="Fey P."/>
            <person name="Pilcher K."/>
            <person name="Chen G."/>
            <person name="Saunders D."/>
            <person name="Sodergren E.J."/>
            <person name="Davis P."/>
            <person name="Kerhornou A."/>
            <person name="Nie X."/>
            <person name="Hall N."/>
            <person name="Anjard C."/>
            <person name="Hemphill L."/>
            <person name="Bason N."/>
            <person name="Farbrother P."/>
            <person name="Desany B."/>
            <person name="Just E."/>
            <person name="Morio T."/>
            <person name="Rost R."/>
            <person name="Churcher C.M."/>
            <person name="Cooper J."/>
            <person name="Haydock S."/>
            <person name="van Driessche N."/>
            <person name="Cronin A."/>
            <person name="Goodhead I."/>
            <person name="Muzny D.M."/>
            <person name="Mourier T."/>
            <person name="Pain A."/>
            <person name="Lu M."/>
            <person name="Harper D."/>
            <person name="Lindsay R."/>
            <person name="Hauser H."/>
            <person name="James K.D."/>
            <person name="Quiles M."/>
            <person name="Madan Babu M."/>
            <person name="Saito T."/>
            <person name="Buchrieser C."/>
            <person name="Wardroper A."/>
            <person name="Felder M."/>
            <person name="Thangavelu M."/>
            <person name="Johnson D."/>
            <person name="Knights A."/>
            <person name="Loulseged H."/>
            <person name="Mungall K.L."/>
            <person name="Oliver K."/>
            <person name="Price C."/>
            <person name="Quail M.A."/>
            <person name="Urushihara H."/>
            <person name="Hernandez J."/>
            <person name="Rabbinowitsch E."/>
            <person name="Steffen D."/>
            <person name="Sanders M."/>
            <person name="Ma J."/>
            <person name="Kohara Y."/>
            <person name="Sharp S."/>
            <person name="Simmonds M.N."/>
            <person name="Spiegler S."/>
            <person name="Tivey A."/>
            <person name="Sugano S."/>
            <person name="White B."/>
            <person name="Walker D."/>
            <person name="Woodward J.R."/>
            <person name="Winckler T."/>
            <person name="Tanaka Y."/>
            <person name="Shaulsky G."/>
            <person name="Schleicher M."/>
            <person name="Weinstock G.M."/>
            <person name="Rosenthal A."/>
            <person name="Cox E.C."/>
            <person name="Chisholm R.L."/>
            <person name="Gibbs R.A."/>
            <person name="Loomis W.F."/>
            <person name="Platzer M."/>
            <person name="Kay R.R."/>
            <person name="Williams J.G."/>
            <person name="Dear P.H."/>
            <person name="Noegel A.A."/>
            <person name="Barrell B.G."/>
            <person name="Kuspa A."/>
        </authorList>
    </citation>
    <scope>NUCLEOTIDE SEQUENCE [LARGE SCALE GENOMIC DNA]</scope>
    <source>
        <strain>AX4</strain>
    </source>
</reference>
<organism>
    <name type="scientific">Dictyostelium discoideum</name>
    <name type="common">Social amoeba</name>
    <dbReference type="NCBI Taxonomy" id="44689"/>
    <lineage>
        <taxon>Eukaryota</taxon>
        <taxon>Amoebozoa</taxon>
        <taxon>Evosea</taxon>
        <taxon>Eumycetozoa</taxon>
        <taxon>Dictyostelia</taxon>
        <taxon>Dictyosteliales</taxon>
        <taxon>Dictyosteliaceae</taxon>
        <taxon>Dictyostelium</taxon>
    </lineage>
</organism>
<comment type="function">
    <text evidence="4">Probable NADPH oxidoreductase that controls development beyond the mound stage.</text>
</comment>
<comment type="cofactor">
    <cofactor evidence="1">
        <name>FAD</name>
        <dbReference type="ChEBI" id="CHEBI:57692"/>
    </cofactor>
    <text evidence="1">Binds 1 FAD per subunit.</text>
</comment>
<comment type="cofactor">
    <cofactor evidence="1">
        <name>FMN</name>
        <dbReference type="ChEBI" id="CHEBI:58210"/>
    </cofactor>
    <text evidence="1">Binds 1 FMN per subunit.</text>
</comment>
<comment type="developmental stage">
    <text evidence="4">Expressed during growth and early development but then decline, reaching undetectable levels after the mound stage.</text>
</comment>
<comment type="disruption phenotype">
    <text evidence="4">Cells develop only to the mound stage and accumulate a bright yellow pigment.</text>
</comment>
<comment type="sequence caution" evidence="5">
    <conflict type="frameshift">
        <sequence resource="EMBL-CDS" id="AAB70186"/>
    </conflict>
</comment>
<accession>Q54B10</accession>
<accession>O15702</accession>
<accession>Q27XC6</accession>